<organism>
    <name type="scientific">Dictyostelium discoideum</name>
    <name type="common">Social amoeba</name>
    <dbReference type="NCBI Taxonomy" id="44689"/>
    <lineage>
        <taxon>Eukaryota</taxon>
        <taxon>Amoebozoa</taxon>
        <taxon>Evosea</taxon>
        <taxon>Eumycetozoa</taxon>
        <taxon>Dictyostelia</taxon>
        <taxon>Dictyosteliales</taxon>
        <taxon>Dictyosteliaceae</taxon>
        <taxon>Dictyostelium</taxon>
    </lineage>
</organism>
<dbReference type="EMBL" id="AAFI02000072">
    <property type="protein sequence ID" value="EAL65015.1"/>
    <property type="molecule type" value="Genomic_DNA"/>
</dbReference>
<dbReference type="RefSeq" id="XP_638370.1">
    <property type="nucleotide sequence ID" value="XM_633278.1"/>
</dbReference>
<dbReference type="PaxDb" id="44689-DDB0215793"/>
<dbReference type="EnsemblProtists" id="EAL65015">
    <property type="protein sequence ID" value="EAL65015"/>
    <property type="gene ID" value="DDB_G0284851"/>
</dbReference>
<dbReference type="GeneID" id="8624803"/>
<dbReference type="KEGG" id="ddi:DDB_G0284851"/>
<dbReference type="VEuPathDB" id="AmoebaDB:DDB_G0284851"/>
<dbReference type="HOGENOM" id="CLU_2946473_0_0_1"/>
<dbReference type="InParanoid" id="Q54P25"/>
<dbReference type="PRO" id="PR:Q54P25"/>
<dbReference type="Proteomes" id="UP000002195">
    <property type="component" value="Chromosome 4"/>
</dbReference>
<keyword id="KW-1185">Reference proteome</keyword>
<accession>Q54P25</accession>
<feature type="chain" id="PRO_0000350778" description="Putative uncharacterized protein DDB_G0284851">
    <location>
        <begin position="1"/>
        <end position="60"/>
    </location>
</feature>
<proteinExistence type="predicted"/>
<name>Y5793_DICDI</name>
<gene>
    <name type="ORF">DDB_G0284851</name>
</gene>
<reference key="1">
    <citation type="journal article" date="2005" name="Nature">
        <title>The genome of the social amoeba Dictyostelium discoideum.</title>
        <authorList>
            <person name="Eichinger L."/>
            <person name="Pachebat J.A."/>
            <person name="Gloeckner G."/>
            <person name="Rajandream M.A."/>
            <person name="Sucgang R."/>
            <person name="Berriman M."/>
            <person name="Song J."/>
            <person name="Olsen R."/>
            <person name="Szafranski K."/>
            <person name="Xu Q."/>
            <person name="Tunggal B."/>
            <person name="Kummerfeld S."/>
            <person name="Madera M."/>
            <person name="Konfortov B.A."/>
            <person name="Rivero F."/>
            <person name="Bankier A.T."/>
            <person name="Lehmann R."/>
            <person name="Hamlin N."/>
            <person name="Davies R."/>
            <person name="Gaudet P."/>
            <person name="Fey P."/>
            <person name="Pilcher K."/>
            <person name="Chen G."/>
            <person name="Saunders D."/>
            <person name="Sodergren E.J."/>
            <person name="Davis P."/>
            <person name="Kerhornou A."/>
            <person name="Nie X."/>
            <person name="Hall N."/>
            <person name="Anjard C."/>
            <person name="Hemphill L."/>
            <person name="Bason N."/>
            <person name="Farbrother P."/>
            <person name="Desany B."/>
            <person name="Just E."/>
            <person name="Morio T."/>
            <person name="Rost R."/>
            <person name="Churcher C.M."/>
            <person name="Cooper J."/>
            <person name="Haydock S."/>
            <person name="van Driessche N."/>
            <person name="Cronin A."/>
            <person name="Goodhead I."/>
            <person name="Muzny D.M."/>
            <person name="Mourier T."/>
            <person name="Pain A."/>
            <person name="Lu M."/>
            <person name="Harper D."/>
            <person name="Lindsay R."/>
            <person name="Hauser H."/>
            <person name="James K.D."/>
            <person name="Quiles M."/>
            <person name="Madan Babu M."/>
            <person name="Saito T."/>
            <person name="Buchrieser C."/>
            <person name="Wardroper A."/>
            <person name="Felder M."/>
            <person name="Thangavelu M."/>
            <person name="Johnson D."/>
            <person name="Knights A."/>
            <person name="Loulseged H."/>
            <person name="Mungall K.L."/>
            <person name="Oliver K."/>
            <person name="Price C."/>
            <person name="Quail M.A."/>
            <person name="Urushihara H."/>
            <person name="Hernandez J."/>
            <person name="Rabbinowitsch E."/>
            <person name="Steffen D."/>
            <person name="Sanders M."/>
            <person name="Ma J."/>
            <person name="Kohara Y."/>
            <person name="Sharp S."/>
            <person name="Simmonds M.N."/>
            <person name="Spiegler S."/>
            <person name="Tivey A."/>
            <person name="Sugano S."/>
            <person name="White B."/>
            <person name="Walker D."/>
            <person name="Woodward J.R."/>
            <person name="Winckler T."/>
            <person name="Tanaka Y."/>
            <person name="Shaulsky G."/>
            <person name="Schleicher M."/>
            <person name="Weinstock G.M."/>
            <person name="Rosenthal A."/>
            <person name="Cox E.C."/>
            <person name="Chisholm R.L."/>
            <person name="Gibbs R.A."/>
            <person name="Loomis W.F."/>
            <person name="Platzer M."/>
            <person name="Kay R.R."/>
            <person name="Williams J.G."/>
            <person name="Dear P.H."/>
            <person name="Noegel A.A."/>
            <person name="Barrell B.G."/>
            <person name="Kuspa A."/>
        </authorList>
    </citation>
    <scope>NUCLEOTIDE SEQUENCE [LARGE SCALE GENOMIC DNA]</scope>
    <source>
        <strain>AX4</strain>
    </source>
</reference>
<protein>
    <recommendedName>
        <fullName>Putative uncharacterized protein DDB_G0284851</fullName>
    </recommendedName>
</protein>
<sequence length="60" mass="6806">MRLIIPRRGDNHCLNTNQSINMDSILDASAGLESLIRSNSIVLSNSFEECIVLYNNYTFK</sequence>